<evidence type="ECO:0000250" key="1"/>
<evidence type="ECO:0000250" key="2">
    <source>
        <dbReference type="UniProtKB" id="Q7Z094"/>
    </source>
</evidence>
<evidence type="ECO:0000269" key="3">
    <source>
    </source>
</evidence>
<evidence type="ECO:0000269" key="4">
    <source>
    </source>
</evidence>
<evidence type="ECO:0000305" key="5"/>
<name>I1BD_CONRA</name>
<dbReference type="EMBL" id="AY208962">
    <property type="protein sequence ID" value="AAP41544.1"/>
    <property type="molecule type" value="mRNA"/>
</dbReference>
<dbReference type="SMR" id="Q7Z091"/>
<dbReference type="ConoServer" id="843">
    <property type="toxin name" value="RXID"/>
</dbReference>
<dbReference type="GO" id="GO:0005576">
    <property type="term" value="C:extracellular region"/>
    <property type="evidence" value="ECO:0007669"/>
    <property type="project" value="UniProtKB-SubCell"/>
</dbReference>
<dbReference type="GO" id="GO:0017080">
    <property type="term" value="F:sodium channel regulator activity"/>
    <property type="evidence" value="ECO:0007669"/>
    <property type="project" value="UniProtKB-KW"/>
</dbReference>
<dbReference type="GO" id="GO:0090729">
    <property type="term" value="F:toxin activity"/>
    <property type="evidence" value="ECO:0007669"/>
    <property type="project" value="UniProtKB-KW"/>
</dbReference>
<dbReference type="Gene3D" id="4.10.40.80">
    <property type="match status" value="1"/>
</dbReference>
<dbReference type="InterPro" id="IPR013141">
    <property type="entry name" value="Conotoxin-I_CS"/>
</dbReference>
<dbReference type="InterPro" id="IPR012624">
    <property type="entry name" value="Toxin_19"/>
</dbReference>
<dbReference type="Pfam" id="PF08088">
    <property type="entry name" value="Toxin_19"/>
    <property type="match status" value="1"/>
</dbReference>
<dbReference type="PROSITE" id="PS60019">
    <property type="entry name" value="I_CONOTOXIN"/>
    <property type="match status" value="1"/>
</dbReference>
<accession>Q7Z091</accession>
<sequence length="41" mass="4373">GCKKDRKPCSYHADCCNCCLSGICAPSTNWILPGCSTSTFT</sequence>
<comment type="function">
    <text evidence="1 4">Iota-conotoxins bind to voltage-gated sodium channels (Nav) and act as agonists by shifting the voltage-dependence of activation to more hyperpolarized levels (By similarity). Both natural (L-Thr form) and synthetic (D-Thr form) peptides cause paralysis and death following intracranial injection and grooming and hypersensitivity upon intraperitoneal injection into mice. The L-Thr form of the peptide is 7-fold more potent than the D-Thr form. Both natural peptide (L-Thr form) and synthetic peptide (D-Thr form) are active on nerve, and on muscle.</text>
</comment>
<comment type="subcellular location">
    <subcellularLocation>
        <location>Secreted</location>
    </subcellularLocation>
</comment>
<comment type="tissue specificity">
    <text>Expressed by the venom duct.</text>
</comment>
<comment type="domain">
    <text>The cysteine framework is XI (C-C-CC-CC-C-C).</text>
</comment>
<comment type="PTM">
    <text>Position 41 corresponds to a L-threonine, and not a D-threonine as firstly supposed.</text>
</comment>
<comment type="mass spectrometry" mass="4399.26" method="MALDI" evidence="3"/>
<comment type="similarity">
    <text evidence="5">Belongs to the conotoxin I1 superfamily.</text>
</comment>
<proteinExistence type="evidence at protein level"/>
<protein>
    <recommendedName>
        <fullName>Iota-conotoxin-like r11d</fullName>
    </recommendedName>
    <alternativeName>
        <fullName>R11.8</fullName>
    </alternativeName>
</protein>
<reference key="1">
    <citation type="journal article" date="2003" name="J. Neurochem.">
        <title>Novel excitatory Conus peptides define a new conotoxin superfamily.</title>
        <authorList>
            <person name="Jimenez E.C."/>
            <person name="Shetty R.P."/>
            <person name="Lirazan M."/>
            <person name="Rivier J."/>
            <person name="Walker C."/>
            <person name="Abogadie F.C."/>
            <person name="Yoshikami D."/>
            <person name="Cruz L.J."/>
            <person name="Olivera B.M."/>
        </authorList>
    </citation>
    <scope>NUCLEOTIDE SEQUENCE [MRNA]</scope>
    <scope>PROTEIN SEQUENCE</scope>
    <scope>HYDROXYLATION AT PRO-8 AND PRO-26</scope>
    <scope>MASS SPECTROMETRY</scope>
    <source>
        <tissue>Venom</tissue>
        <tissue>Venom duct</tissue>
    </source>
</reference>
<reference key="2">
    <citation type="journal article" date="2008" name="Toxicon">
        <title>I(1)-superfamily conotoxins and prediction of single D-amino acid occurrence.</title>
        <authorList>
            <person name="Buczek O."/>
            <person name="Jimenez E.C."/>
            <person name="Yoshikami D."/>
            <person name="Imperial J.S."/>
            <person name="Watkins M."/>
            <person name="Morrison A."/>
            <person name="Olivera B.M."/>
        </authorList>
    </citation>
    <scope>PROTEIN SEQUENCE</scope>
    <scope>SYNTHESIS OF [L-THR-41]R11D AND [D-THR-41]R11D</scope>
    <scope>FUNCTION</scope>
    <source>
        <tissue>Venom</tissue>
    </source>
</reference>
<feature type="chain" id="PRO_0000086870" description="Iota-conotoxin-like r11d">
    <location>
        <begin position="1"/>
        <end position="41"/>
    </location>
</feature>
<feature type="modified residue" description="4-hydroxyproline" evidence="3">
    <location>
        <position position="8"/>
    </location>
</feature>
<feature type="modified residue" description="4-hydroxyproline" evidence="3">
    <location>
        <position position="26"/>
    </location>
</feature>
<feature type="disulfide bond" evidence="2">
    <location>
        <begin position="2"/>
        <end position="16"/>
    </location>
</feature>
<feature type="disulfide bond" evidence="2">
    <location>
        <begin position="9"/>
        <end position="19"/>
    </location>
</feature>
<feature type="disulfide bond" evidence="2">
    <location>
        <begin position="15"/>
        <end position="24"/>
    </location>
</feature>
<feature type="disulfide bond" evidence="2">
    <location>
        <begin position="18"/>
        <end position="35"/>
    </location>
</feature>
<keyword id="KW-0903">Direct protein sequencing</keyword>
<keyword id="KW-1015">Disulfide bond</keyword>
<keyword id="KW-0379">Hydroxylation</keyword>
<keyword id="KW-0872">Ion channel impairing toxin</keyword>
<keyword id="KW-0528">Neurotoxin</keyword>
<keyword id="KW-0964">Secreted</keyword>
<keyword id="KW-0800">Toxin</keyword>
<keyword id="KW-0738">Voltage-gated sodium channel impairing toxin</keyword>
<organism>
    <name type="scientific">Conus radiatus</name>
    <name type="common">Rayed cone</name>
    <dbReference type="NCBI Taxonomy" id="61198"/>
    <lineage>
        <taxon>Eukaryota</taxon>
        <taxon>Metazoa</taxon>
        <taxon>Spiralia</taxon>
        <taxon>Lophotrochozoa</taxon>
        <taxon>Mollusca</taxon>
        <taxon>Gastropoda</taxon>
        <taxon>Caenogastropoda</taxon>
        <taxon>Neogastropoda</taxon>
        <taxon>Conoidea</taxon>
        <taxon>Conidae</taxon>
        <taxon>Conus</taxon>
        <taxon>Phasmoconus</taxon>
    </lineage>
</organism>